<protein>
    <recommendedName>
        <fullName evidence="1">Protein translocase subunit SecA 2</fullName>
        <ecNumber evidence="1">7.4.2.8</ecNumber>
    </recommendedName>
</protein>
<proteinExistence type="inferred from homology"/>
<reference key="1">
    <citation type="journal article" date="2004" name="Proc. Natl. Acad. Sci. U.S.A.">
        <title>Complete genomes of two clinical Staphylococcus aureus strains: evidence for the rapid evolution of virulence and drug resistance.</title>
        <authorList>
            <person name="Holden M.T.G."/>
            <person name="Feil E.J."/>
            <person name="Lindsay J.A."/>
            <person name="Peacock S.J."/>
            <person name="Day N.P.J."/>
            <person name="Enright M.C."/>
            <person name="Foster T.J."/>
            <person name="Moore C.E."/>
            <person name="Hurst L."/>
            <person name="Atkin R."/>
            <person name="Barron A."/>
            <person name="Bason N."/>
            <person name="Bentley S.D."/>
            <person name="Chillingworth C."/>
            <person name="Chillingworth T."/>
            <person name="Churcher C."/>
            <person name="Clark L."/>
            <person name="Corton C."/>
            <person name="Cronin A."/>
            <person name="Doggett J."/>
            <person name="Dowd L."/>
            <person name="Feltwell T."/>
            <person name="Hance Z."/>
            <person name="Harris B."/>
            <person name="Hauser H."/>
            <person name="Holroyd S."/>
            <person name="Jagels K."/>
            <person name="James K.D."/>
            <person name="Lennard N."/>
            <person name="Line A."/>
            <person name="Mayes R."/>
            <person name="Moule S."/>
            <person name="Mungall K."/>
            <person name="Ormond D."/>
            <person name="Quail M.A."/>
            <person name="Rabbinowitsch E."/>
            <person name="Rutherford K.M."/>
            <person name="Sanders M."/>
            <person name="Sharp S."/>
            <person name="Simmonds M."/>
            <person name="Stevens K."/>
            <person name="Whitehead S."/>
            <person name="Barrell B.G."/>
            <person name="Spratt B.G."/>
            <person name="Parkhill J."/>
        </authorList>
    </citation>
    <scope>NUCLEOTIDE SEQUENCE [LARGE SCALE GENOMIC DNA]</scope>
    <source>
        <strain>MRSA252</strain>
    </source>
</reference>
<feature type="chain" id="PRO_0000318424" description="Protein translocase subunit SecA 2">
    <location>
        <begin position="1"/>
        <end position="796"/>
    </location>
</feature>
<feature type="binding site" evidence="1">
    <location>
        <position position="84"/>
    </location>
    <ligand>
        <name>ATP</name>
        <dbReference type="ChEBI" id="CHEBI:30616"/>
    </ligand>
</feature>
<feature type="binding site" evidence="1">
    <location>
        <begin position="102"/>
        <end position="106"/>
    </location>
    <ligand>
        <name>ATP</name>
        <dbReference type="ChEBI" id="CHEBI:30616"/>
    </ligand>
</feature>
<feature type="binding site" evidence="1">
    <location>
        <position position="496"/>
    </location>
    <ligand>
        <name>ATP</name>
        <dbReference type="ChEBI" id="CHEBI:30616"/>
    </ligand>
</feature>
<organism>
    <name type="scientific">Staphylococcus aureus (strain MRSA252)</name>
    <dbReference type="NCBI Taxonomy" id="282458"/>
    <lineage>
        <taxon>Bacteria</taxon>
        <taxon>Bacillati</taxon>
        <taxon>Bacillota</taxon>
        <taxon>Bacilli</taxon>
        <taxon>Bacillales</taxon>
        <taxon>Staphylococcaceae</taxon>
        <taxon>Staphylococcus</taxon>
    </lineage>
</organism>
<sequence length="796" mass="91048">MKHKLDVTINELRLKSIRKIVKRINTWSDEVKSYSDDVLKQKTLEFKERIASGVDTLDTLLPEAYAVAREASWRVLGMYPKEVQLIGAIVLHEGNIAEMQTGEGKTLTATMPLYLNALSGKGTYLITTNDYLAKRDFEEMQPLYEWLGLTASLGFVDIVDYEYQKGEKRNIYEHDIIYTTNGRLGFDYLIDNLADSAEGKFLPQLNYGIIDEVDSIILDAAQTPLVISGAPRLQSNLFHIVKEFVDTLIEDVHFKMKKTKKEIWLLNQGIEAAQSYFNVEDLYSEQAMVLVRNINLALRAQYLFESNVDYFVYNGDIVLIDRITGRMLPGTKLQAGLHQAIEAKEGMEVSTDKSVMATITFQNLFKLFESFSGMTATGKLGESEFFDLYSKIVVQVPTDKAIQRIDEPDKVFRSVDEKNIAMIHDIVELHETGRPVLLITRTAEAAEYFSKVFFQMDIPNNLLIAQNVAKEAQMIAEAGQIGSMTVATSMAGRGTDIKLGEGVEALGGLAVIIHEHMENSRVDRQLRGRSGRQGDPGSSCIYISLDDYLVKRWSDSNLAENNQLYSLDAQRLSQSSLFNRKVKQIVVKAQRISEEQGVKAREMANEFEKSISIQRDLVYEERNRVLEIDDAENRDFKVLAKDVFEMFVNEEKVLTKSRVVEYIYQNLSFQFNKDVACVNFKDKQAVVTFLLEQFEKQIALNRKNMQSAYYYNIFVQKVFLKAIDSCWLEQVDYLQQLKANVNQRQNGQRNAIFEYHRVALDSFEVMTRNIKKRMVKNICQSMITFDKEGMPVIHFP</sequence>
<gene>
    <name evidence="1" type="primary">secA2</name>
    <name type="ordered locus">SAR2728</name>
</gene>
<keyword id="KW-0067">ATP-binding</keyword>
<keyword id="KW-1003">Cell membrane</keyword>
<keyword id="KW-0963">Cytoplasm</keyword>
<keyword id="KW-0472">Membrane</keyword>
<keyword id="KW-0547">Nucleotide-binding</keyword>
<keyword id="KW-0653">Protein transport</keyword>
<keyword id="KW-1278">Translocase</keyword>
<keyword id="KW-0811">Translocation</keyword>
<keyword id="KW-0813">Transport</keyword>
<dbReference type="EC" id="7.4.2.8" evidence="1"/>
<dbReference type="EMBL" id="BX571856">
    <property type="protein sequence ID" value="CAG41706.1"/>
    <property type="molecule type" value="Genomic_DNA"/>
</dbReference>
<dbReference type="RefSeq" id="WP_000680966.1">
    <property type="nucleotide sequence ID" value="NC_002952.2"/>
</dbReference>
<dbReference type="SMR" id="Q6GDF3"/>
<dbReference type="KEGG" id="sar:SAR2728"/>
<dbReference type="HOGENOM" id="CLU_005314_3_2_9"/>
<dbReference type="Proteomes" id="UP000000596">
    <property type="component" value="Chromosome"/>
</dbReference>
<dbReference type="GO" id="GO:0031522">
    <property type="term" value="C:cell envelope Sec protein transport complex"/>
    <property type="evidence" value="ECO:0007669"/>
    <property type="project" value="TreeGrafter"/>
</dbReference>
<dbReference type="GO" id="GO:0005829">
    <property type="term" value="C:cytosol"/>
    <property type="evidence" value="ECO:0007669"/>
    <property type="project" value="TreeGrafter"/>
</dbReference>
<dbReference type="GO" id="GO:0005886">
    <property type="term" value="C:plasma membrane"/>
    <property type="evidence" value="ECO:0007669"/>
    <property type="project" value="UniProtKB-SubCell"/>
</dbReference>
<dbReference type="GO" id="GO:0005524">
    <property type="term" value="F:ATP binding"/>
    <property type="evidence" value="ECO:0007669"/>
    <property type="project" value="UniProtKB-UniRule"/>
</dbReference>
<dbReference type="GO" id="GO:0008564">
    <property type="term" value="F:protein-exporting ATPase activity"/>
    <property type="evidence" value="ECO:0007669"/>
    <property type="project" value="UniProtKB-EC"/>
</dbReference>
<dbReference type="GO" id="GO:0065002">
    <property type="term" value="P:intracellular protein transmembrane transport"/>
    <property type="evidence" value="ECO:0007669"/>
    <property type="project" value="UniProtKB-UniRule"/>
</dbReference>
<dbReference type="GO" id="GO:0017038">
    <property type="term" value="P:protein import"/>
    <property type="evidence" value="ECO:0007669"/>
    <property type="project" value="InterPro"/>
</dbReference>
<dbReference type="GO" id="GO:0006605">
    <property type="term" value="P:protein targeting"/>
    <property type="evidence" value="ECO:0007669"/>
    <property type="project" value="UniProtKB-UniRule"/>
</dbReference>
<dbReference type="GO" id="GO:0043952">
    <property type="term" value="P:protein transport by the Sec complex"/>
    <property type="evidence" value="ECO:0007669"/>
    <property type="project" value="TreeGrafter"/>
</dbReference>
<dbReference type="CDD" id="cd17928">
    <property type="entry name" value="DEXDc_SecA"/>
    <property type="match status" value="1"/>
</dbReference>
<dbReference type="CDD" id="cd18803">
    <property type="entry name" value="SF2_C_secA"/>
    <property type="match status" value="1"/>
</dbReference>
<dbReference type="FunFam" id="3.40.50.300:FF:000429">
    <property type="entry name" value="Preprotein translocase subunit SecA"/>
    <property type="match status" value="1"/>
</dbReference>
<dbReference type="FunFam" id="3.40.50.300:FF:001575">
    <property type="entry name" value="Protein translocase subunit SecA 2"/>
    <property type="match status" value="1"/>
</dbReference>
<dbReference type="Gene3D" id="1.10.3060.10">
    <property type="entry name" value="Helical scaffold and wing domains of SecA"/>
    <property type="match status" value="1"/>
</dbReference>
<dbReference type="Gene3D" id="3.40.50.300">
    <property type="entry name" value="P-loop containing nucleotide triphosphate hydrolases"/>
    <property type="match status" value="2"/>
</dbReference>
<dbReference type="Gene3D" id="3.90.1440.10">
    <property type="entry name" value="SecA, preprotein cross-linking domain"/>
    <property type="match status" value="1"/>
</dbReference>
<dbReference type="HAMAP" id="MF_01382">
    <property type="entry name" value="SecA"/>
    <property type="match status" value="1"/>
</dbReference>
<dbReference type="InterPro" id="IPR014001">
    <property type="entry name" value="Helicase_ATP-bd"/>
</dbReference>
<dbReference type="InterPro" id="IPR001650">
    <property type="entry name" value="Helicase_C-like"/>
</dbReference>
<dbReference type="InterPro" id="IPR027417">
    <property type="entry name" value="P-loop_NTPase"/>
</dbReference>
<dbReference type="InterPro" id="IPR000185">
    <property type="entry name" value="SecA"/>
</dbReference>
<dbReference type="InterPro" id="IPR022490">
    <property type="entry name" value="SecA2"/>
</dbReference>
<dbReference type="InterPro" id="IPR011115">
    <property type="entry name" value="SecA_DEAD"/>
</dbReference>
<dbReference type="InterPro" id="IPR014018">
    <property type="entry name" value="SecA_motor_DEAD"/>
</dbReference>
<dbReference type="InterPro" id="IPR011130">
    <property type="entry name" value="SecA_preprotein_X-link_dom"/>
</dbReference>
<dbReference type="InterPro" id="IPR044722">
    <property type="entry name" value="SecA_SF2_C"/>
</dbReference>
<dbReference type="InterPro" id="IPR011116">
    <property type="entry name" value="SecA_Wing/Scaffold"/>
</dbReference>
<dbReference type="InterPro" id="IPR036266">
    <property type="entry name" value="SecA_Wing/Scaffold_sf"/>
</dbReference>
<dbReference type="InterPro" id="IPR036670">
    <property type="entry name" value="SecA_X-link_sf"/>
</dbReference>
<dbReference type="NCBIfam" id="NF006630">
    <property type="entry name" value="PRK09200.1"/>
    <property type="match status" value="1"/>
</dbReference>
<dbReference type="NCBIfam" id="TIGR03714">
    <property type="entry name" value="secA2"/>
    <property type="match status" value="1"/>
</dbReference>
<dbReference type="PANTHER" id="PTHR30612:SF0">
    <property type="entry name" value="CHLOROPLAST PROTEIN-TRANSPORTING ATPASE"/>
    <property type="match status" value="1"/>
</dbReference>
<dbReference type="PANTHER" id="PTHR30612">
    <property type="entry name" value="SECA INNER MEMBRANE COMPONENT OF SEC PROTEIN SECRETION SYSTEM"/>
    <property type="match status" value="1"/>
</dbReference>
<dbReference type="Pfam" id="PF21090">
    <property type="entry name" value="P-loop_SecA"/>
    <property type="match status" value="1"/>
</dbReference>
<dbReference type="Pfam" id="PF07517">
    <property type="entry name" value="SecA_DEAD"/>
    <property type="match status" value="1"/>
</dbReference>
<dbReference type="Pfam" id="PF01043">
    <property type="entry name" value="SecA_PP_bind"/>
    <property type="match status" value="1"/>
</dbReference>
<dbReference type="Pfam" id="PF07516">
    <property type="entry name" value="SecA_SW"/>
    <property type="match status" value="1"/>
</dbReference>
<dbReference type="PRINTS" id="PR00906">
    <property type="entry name" value="SECA"/>
</dbReference>
<dbReference type="SMART" id="SM00957">
    <property type="entry name" value="SecA_DEAD"/>
    <property type="match status" value="1"/>
</dbReference>
<dbReference type="SMART" id="SM00958">
    <property type="entry name" value="SecA_PP_bind"/>
    <property type="match status" value="1"/>
</dbReference>
<dbReference type="SUPFAM" id="SSF81886">
    <property type="entry name" value="Helical scaffold and wing domains of SecA"/>
    <property type="match status" value="1"/>
</dbReference>
<dbReference type="SUPFAM" id="SSF52540">
    <property type="entry name" value="P-loop containing nucleoside triphosphate hydrolases"/>
    <property type="match status" value="2"/>
</dbReference>
<dbReference type="SUPFAM" id="SSF81767">
    <property type="entry name" value="Pre-protein crosslinking domain of SecA"/>
    <property type="match status" value="1"/>
</dbReference>
<dbReference type="PROSITE" id="PS51196">
    <property type="entry name" value="SECA_MOTOR_DEAD"/>
    <property type="match status" value="1"/>
</dbReference>
<comment type="function">
    <text evidence="1">Part of the Sec protein translocase complex. Interacts with the SecYEG preprotein conducting channel. Has a central role in coupling the hydrolysis of ATP to the transfer of proteins into and across the cell membrane, serving as an ATP-driven molecular motor driving the stepwise translocation of polypeptide chains across the membrane.</text>
</comment>
<comment type="catalytic activity">
    <reaction evidence="1">
        <text>ATP + H2O + cellular proteinSide 1 = ADP + phosphate + cellular proteinSide 2.</text>
        <dbReference type="EC" id="7.4.2.8"/>
    </reaction>
</comment>
<comment type="subunit">
    <text evidence="1">Monomer and homodimer. Part of the essential Sec protein translocation apparatus which comprises SecA, SecYEG and auxiliary proteins SecDF. Other proteins may also be involved.</text>
</comment>
<comment type="subcellular location">
    <subcellularLocation>
        <location evidence="1">Cell membrane</location>
        <topology evidence="1">Peripheral membrane protein</topology>
        <orientation evidence="1">Cytoplasmic side</orientation>
    </subcellularLocation>
    <subcellularLocation>
        <location evidence="1">Cytoplasm</location>
    </subcellularLocation>
    <text evidence="1">Distribution is 50-50.</text>
</comment>
<comment type="similarity">
    <text evidence="1">Belongs to the SecA family.</text>
</comment>
<name>SECA2_STAAR</name>
<accession>Q6GDF3</accession>
<evidence type="ECO:0000255" key="1">
    <source>
        <dbReference type="HAMAP-Rule" id="MF_01382"/>
    </source>
</evidence>